<comment type="function">
    <text evidence="2">Transcriptional repressor that binds the core 5'GNNTGTNG-3' DNA consensus sequence (By similarity).</text>
</comment>
<comment type="subunit">
    <text evidence="1">Probably self-associates.</text>
</comment>
<comment type="subcellular location">
    <subcellularLocation>
        <location evidence="2">Nucleus</location>
    </subcellularLocation>
</comment>
<comment type="miscellaneous">
    <text>'Pegasus' was the winged horse in Greek mythology.</text>
</comment>
<comment type="similarity">
    <text evidence="5">Belongs to the Ikaros C2H2-type zinc-finger protein family.</text>
</comment>
<evidence type="ECO:0000250" key="1"/>
<evidence type="ECO:0000250" key="2">
    <source>
        <dbReference type="UniProtKB" id="Q9H5V7"/>
    </source>
</evidence>
<evidence type="ECO:0000255" key="3">
    <source>
        <dbReference type="PROSITE-ProRule" id="PRU00042"/>
    </source>
</evidence>
<evidence type="ECO:0000256" key="4">
    <source>
        <dbReference type="SAM" id="MobiDB-lite"/>
    </source>
</evidence>
<evidence type="ECO:0000305" key="5"/>
<keyword id="KW-0238">DNA-binding</keyword>
<keyword id="KW-0479">Metal-binding</keyword>
<keyword id="KW-0539">Nucleus</keyword>
<keyword id="KW-1185">Reference proteome</keyword>
<keyword id="KW-0677">Repeat</keyword>
<keyword id="KW-0678">Repressor</keyword>
<keyword id="KW-0804">Transcription</keyword>
<keyword id="KW-0805">Transcription regulation</keyword>
<keyword id="KW-0862">Zinc</keyword>
<keyword id="KW-0863">Zinc-finger</keyword>
<dbReference type="EMBL" id="AY394931">
    <property type="protein sequence ID" value="AAQ94558.1"/>
    <property type="molecule type" value="mRNA"/>
</dbReference>
<dbReference type="EMBL" id="BC078341">
    <property type="protein sequence ID" value="AAH78341.1"/>
    <property type="molecule type" value="mRNA"/>
</dbReference>
<dbReference type="RefSeq" id="NP_991164.1">
    <property type="nucleotide sequence ID" value="NM_205601.1"/>
</dbReference>
<dbReference type="RefSeq" id="XP_009291296.1">
    <property type="nucleotide sequence ID" value="XM_009293021.4"/>
</dbReference>
<dbReference type="SMR" id="Q6DBW0"/>
<dbReference type="FunCoup" id="Q6DBW0">
    <property type="interactions" value="2298"/>
</dbReference>
<dbReference type="STRING" id="7955.ENSDARP00000073468"/>
<dbReference type="PaxDb" id="7955-ENSDARP00000073468"/>
<dbReference type="Ensembl" id="ENSDART00000079011">
    <property type="protein sequence ID" value="ENSDARP00000073468"/>
    <property type="gene ID" value="ENSDARG00000056491"/>
</dbReference>
<dbReference type="Ensembl" id="ENSDART00000125335">
    <property type="protein sequence ID" value="ENSDARP00000109784"/>
    <property type="gene ID" value="ENSDARG00000056491"/>
</dbReference>
<dbReference type="Ensembl" id="ENSDART00000179851">
    <property type="protein sequence ID" value="ENSDARP00000149129"/>
    <property type="gene ID" value="ENSDARG00000116693"/>
</dbReference>
<dbReference type="Ensembl" id="ENSDART00000189387">
    <property type="protein sequence ID" value="ENSDARP00000147344"/>
    <property type="gene ID" value="ENSDARG00000056491"/>
</dbReference>
<dbReference type="Ensembl" id="ENSDART00000190425">
    <property type="protein sequence ID" value="ENSDARP00000146647"/>
    <property type="gene ID" value="ENSDARG00000056491"/>
</dbReference>
<dbReference type="GeneID" id="402893"/>
<dbReference type="KEGG" id="dre:402893"/>
<dbReference type="AGR" id="ZFIN:ZDB-GENE-040801-209"/>
<dbReference type="CTD" id="64376"/>
<dbReference type="ZFIN" id="ZDB-GENE-040801-209">
    <property type="gene designation" value="ikzf5"/>
</dbReference>
<dbReference type="eggNOG" id="KOG1721">
    <property type="taxonomic scope" value="Eukaryota"/>
</dbReference>
<dbReference type="HOGENOM" id="CLU_734778_0_0_1"/>
<dbReference type="InParanoid" id="Q6DBW0"/>
<dbReference type="OMA" id="ANDFSHE"/>
<dbReference type="OrthoDB" id="5576026at2759"/>
<dbReference type="PhylomeDB" id="Q6DBW0"/>
<dbReference type="TreeFam" id="TF331860"/>
<dbReference type="PRO" id="PR:Q6DBW0"/>
<dbReference type="Proteomes" id="UP000000437">
    <property type="component" value="Alternate scaffold 17"/>
</dbReference>
<dbReference type="Proteomes" id="UP000000437">
    <property type="component" value="Chromosome 17"/>
</dbReference>
<dbReference type="Bgee" id="ENSDARG00000056491">
    <property type="expression patterns" value="Expressed in cleaving embryo and 26 other cell types or tissues"/>
</dbReference>
<dbReference type="ExpressionAtlas" id="Q6DBW0">
    <property type="expression patterns" value="baseline"/>
</dbReference>
<dbReference type="GO" id="GO:0005634">
    <property type="term" value="C:nucleus"/>
    <property type="evidence" value="ECO:0000250"/>
    <property type="project" value="UniProtKB"/>
</dbReference>
<dbReference type="GO" id="GO:0003682">
    <property type="term" value="F:chromatin binding"/>
    <property type="evidence" value="ECO:0000250"/>
    <property type="project" value="UniProtKB"/>
</dbReference>
<dbReference type="GO" id="GO:0003700">
    <property type="term" value="F:DNA-binding transcription factor activity"/>
    <property type="evidence" value="ECO:0000318"/>
    <property type="project" value="GO_Central"/>
</dbReference>
<dbReference type="GO" id="GO:0000978">
    <property type="term" value="F:RNA polymerase II cis-regulatory region sequence-specific DNA binding"/>
    <property type="evidence" value="ECO:0000318"/>
    <property type="project" value="GO_Central"/>
</dbReference>
<dbReference type="GO" id="GO:0008270">
    <property type="term" value="F:zinc ion binding"/>
    <property type="evidence" value="ECO:0007669"/>
    <property type="project" value="UniProtKB-KW"/>
</dbReference>
<dbReference type="GO" id="GO:0071908">
    <property type="term" value="P:determination of intestine left/right asymmetry"/>
    <property type="evidence" value="ECO:0000315"/>
    <property type="project" value="ZFIN"/>
</dbReference>
<dbReference type="GO" id="GO:0003140">
    <property type="term" value="P:determination of left/right asymmetry in lateral mesoderm"/>
    <property type="evidence" value="ECO:0000315"/>
    <property type="project" value="ZFIN"/>
</dbReference>
<dbReference type="GO" id="GO:0007368">
    <property type="term" value="P:determination of left/right symmetry"/>
    <property type="evidence" value="ECO:0000315"/>
    <property type="project" value="ZFIN"/>
</dbReference>
<dbReference type="GO" id="GO:0035469">
    <property type="term" value="P:determination of pancreatic left/right asymmetry"/>
    <property type="evidence" value="ECO:0000315"/>
    <property type="project" value="ZFIN"/>
</dbReference>
<dbReference type="GO" id="GO:0006357">
    <property type="term" value="P:regulation of transcription by RNA polymerase II"/>
    <property type="evidence" value="ECO:0000318"/>
    <property type="project" value="GO_Central"/>
</dbReference>
<dbReference type="FunFam" id="3.30.160.60:FF:000402">
    <property type="entry name" value="IKAROS family zinc finger 5"/>
    <property type="match status" value="1"/>
</dbReference>
<dbReference type="FunFam" id="3.30.160.60:FF:000924">
    <property type="entry name" value="IKAROS family zinc finger 5"/>
    <property type="match status" value="1"/>
</dbReference>
<dbReference type="FunFam" id="3.30.160.60:FF:001097">
    <property type="entry name" value="IKAROS family zinc finger 5"/>
    <property type="match status" value="1"/>
</dbReference>
<dbReference type="Gene3D" id="3.30.160.60">
    <property type="entry name" value="Classic Zinc Finger"/>
    <property type="match status" value="3"/>
</dbReference>
<dbReference type="InterPro" id="IPR050589">
    <property type="entry name" value="Ikaros_C2H2-ZF"/>
</dbReference>
<dbReference type="InterPro" id="IPR036236">
    <property type="entry name" value="Znf_C2H2_sf"/>
</dbReference>
<dbReference type="InterPro" id="IPR013087">
    <property type="entry name" value="Znf_C2H2_type"/>
</dbReference>
<dbReference type="PANTHER" id="PTHR24404">
    <property type="entry name" value="ZINC FINGER PROTEIN"/>
    <property type="match status" value="1"/>
</dbReference>
<dbReference type="PANTHER" id="PTHR24404:SF55">
    <property type="entry name" value="ZINC FINGER PROTEIN PEGASUS"/>
    <property type="match status" value="1"/>
</dbReference>
<dbReference type="SMART" id="SM00355">
    <property type="entry name" value="ZnF_C2H2"/>
    <property type="match status" value="5"/>
</dbReference>
<dbReference type="SUPFAM" id="SSF57667">
    <property type="entry name" value="beta-beta-alpha zinc fingers"/>
    <property type="match status" value="3"/>
</dbReference>
<dbReference type="PROSITE" id="PS00028">
    <property type="entry name" value="ZINC_FINGER_C2H2_1"/>
    <property type="match status" value="3"/>
</dbReference>
<dbReference type="PROSITE" id="PS50157">
    <property type="entry name" value="ZINC_FINGER_C2H2_2"/>
    <property type="match status" value="3"/>
</dbReference>
<name>IKZF5_DANRE</name>
<protein>
    <recommendedName>
        <fullName>Zinc finger protein Pegasus</fullName>
    </recommendedName>
    <alternativeName>
        <fullName>Ikaros family zinc finger protein 5</fullName>
    </alternativeName>
</protein>
<reference key="1">
    <citation type="journal article" date="2004" name="Proc. Natl. Acad. Sci. U.S.A.">
        <title>Hematopoietic gene expression profile in zebrafish kidney marrow.</title>
        <authorList>
            <person name="Song H.-D."/>
            <person name="Sun X.-J."/>
            <person name="Deng M."/>
            <person name="Zhang G.-W."/>
            <person name="Zhou Y."/>
            <person name="Wu X.-Y."/>
            <person name="Sheng Y."/>
            <person name="Chen Y."/>
            <person name="Ruan Z."/>
            <person name="Jiang C.-L."/>
            <person name="Fan H.-Y."/>
            <person name="Zon L.I."/>
            <person name="Kanki J.P."/>
            <person name="Liu T.X."/>
            <person name="Look A.T."/>
            <person name="Chen Z."/>
        </authorList>
    </citation>
    <scope>NUCLEOTIDE SEQUENCE [LARGE SCALE MRNA]</scope>
    <source>
        <tissue>Kidney marrow</tissue>
    </source>
</reference>
<reference key="2">
    <citation type="submission" date="2004-07" db="EMBL/GenBank/DDBJ databases">
        <authorList>
            <consortium name="NIH - Zebrafish Gene Collection (ZGC) project"/>
        </authorList>
    </citation>
    <scope>NUCLEOTIDE SEQUENCE [LARGE SCALE MRNA]</scope>
</reference>
<accession>Q6DBW0</accession>
<accession>Q6TLH4</accession>
<proteinExistence type="evidence at transcript level"/>
<gene>
    <name type="primary">ikzf5</name>
    <name type="ORF">zgc:92405</name>
</gene>
<feature type="chain" id="PRO_0000299475" description="Zinc finger protein Pegasus">
    <location>
        <begin position="1"/>
        <end position="419"/>
    </location>
</feature>
<feature type="zinc finger region" description="C2H2-type 1" evidence="3">
    <location>
        <begin position="79"/>
        <end position="101"/>
    </location>
</feature>
<feature type="zinc finger region" description="C2H2-type 2" evidence="3">
    <location>
        <begin position="107"/>
        <end position="129"/>
    </location>
</feature>
<feature type="zinc finger region" description="C2H2-type 3" evidence="3">
    <location>
        <begin position="135"/>
        <end position="158"/>
    </location>
</feature>
<feature type="zinc finger region" description="C2H2-type 4" evidence="3">
    <location>
        <begin position="366"/>
        <end position="388"/>
    </location>
</feature>
<feature type="zinc finger region" description="C2H2-type 5" evidence="3">
    <location>
        <begin position="394"/>
        <end position="418"/>
    </location>
</feature>
<feature type="region of interest" description="Disordered" evidence="4">
    <location>
        <begin position="203"/>
        <end position="255"/>
    </location>
</feature>
<feature type="region of interest" description="Disordered" evidence="4">
    <location>
        <begin position="310"/>
        <end position="360"/>
    </location>
</feature>
<feature type="compositionally biased region" description="Basic and acidic residues" evidence="4">
    <location>
        <begin position="208"/>
        <end position="228"/>
    </location>
</feature>
<feature type="compositionally biased region" description="Polar residues" evidence="4">
    <location>
        <begin position="310"/>
        <end position="320"/>
    </location>
</feature>
<feature type="compositionally biased region" description="Polar residues" evidence="4">
    <location>
        <begin position="341"/>
        <end position="360"/>
    </location>
</feature>
<feature type="sequence conflict" description="In Ref. 1; AAQ94558." evidence="5" ref="1">
    <original>G</original>
    <variation>S</variation>
    <location>
        <position position="187"/>
    </location>
</feature>
<feature type="sequence conflict" description="In Ref. 1; AAQ94558." evidence="5" ref="1">
    <original>H</original>
    <variation>Q</variation>
    <location>
        <position position="211"/>
    </location>
</feature>
<feature type="sequence conflict" description="In Ref. 1; AAQ94558." evidence="5" ref="1">
    <original>P</original>
    <variation>T</variation>
    <location>
        <position position="295"/>
    </location>
</feature>
<feature type="sequence conflict" description="In Ref. 1; AAQ94558." evidence="5" ref="1">
    <original>P</original>
    <variation>T</variation>
    <location>
        <position position="326"/>
    </location>
</feature>
<sequence>MGEEKPEPLDFVKDFQEYLSQQTQHVNMISGSVIGVKDSDDLQGELAQNGLEHPAVDMSLEDSSGMLVDGFERTYDGKLKCRYCNYATRGTARLIEHIRIHTGEKPHRCHLCPFASAYERHLEAHMRSHTGEKPYKCELCSFRCSDRSNLSHHRRRRHKLLPMKGARSALSHRKMLSVLQKRGNSLGYGRRLLINLSPPSMVLQKPSSEQHHLGDFTHDLPPHAHLHQEAYNGLGKDPQAIGGAIGSGSREDQDMALDNPLNQLSTLAGQLASIPSEAEGAPVSPGAESLPDEKPTFLVQQPVTAPAAVSVNTAQASSPITPEPRPAAHSGCSPGVGPCSERTSTPSGTNSQPGTPTPVQDPQMLHHCPHCHIYFPDNILYTIHMGCHGYENPFQCNICGHRCRNSYDFACHFARGQHK</sequence>
<organism>
    <name type="scientific">Danio rerio</name>
    <name type="common">Zebrafish</name>
    <name type="synonym">Brachydanio rerio</name>
    <dbReference type="NCBI Taxonomy" id="7955"/>
    <lineage>
        <taxon>Eukaryota</taxon>
        <taxon>Metazoa</taxon>
        <taxon>Chordata</taxon>
        <taxon>Craniata</taxon>
        <taxon>Vertebrata</taxon>
        <taxon>Euteleostomi</taxon>
        <taxon>Actinopterygii</taxon>
        <taxon>Neopterygii</taxon>
        <taxon>Teleostei</taxon>
        <taxon>Ostariophysi</taxon>
        <taxon>Cypriniformes</taxon>
        <taxon>Danionidae</taxon>
        <taxon>Danioninae</taxon>
        <taxon>Danio</taxon>
    </lineage>
</organism>